<reference key="1">
    <citation type="journal article" date="2006" name="Proc. Natl. Acad. Sci. U.S.A.">
        <title>Comparative genomics of the lactic acid bacteria.</title>
        <authorList>
            <person name="Makarova K.S."/>
            <person name="Slesarev A."/>
            <person name="Wolf Y.I."/>
            <person name="Sorokin A."/>
            <person name="Mirkin B."/>
            <person name="Koonin E.V."/>
            <person name="Pavlov A."/>
            <person name="Pavlova N."/>
            <person name="Karamychev V."/>
            <person name="Polouchine N."/>
            <person name="Shakhova V."/>
            <person name="Grigoriev I."/>
            <person name="Lou Y."/>
            <person name="Rohksar D."/>
            <person name="Lucas S."/>
            <person name="Huang K."/>
            <person name="Goodstein D.M."/>
            <person name="Hawkins T."/>
            <person name="Plengvidhya V."/>
            <person name="Welker D."/>
            <person name="Hughes J."/>
            <person name="Goh Y."/>
            <person name="Benson A."/>
            <person name="Baldwin K."/>
            <person name="Lee J.-H."/>
            <person name="Diaz-Muniz I."/>
            <person name="Dosti B."/>
            <person name="Smeianov V."/>
            <person name="Wechter W."/>
            <person name="Barabote R."/>
            <person name="Lorca G."/>
            <person name="Altermann E."/>
            <person name="Barrangou R."/>
            <person name="Ganesan B."/>
            <person name="Xie Y."/>
            <person name="Rawsthorne H."/>
            <person name="Tamir D."/>
            <person name="Parker C."/>
            <person name="Breidt F."/>
            <person name="Broadbent J.R."/>
            <person name="Hutkins R."/>
            <person name="O'Sullivan D."/>
            <person name="Steele J."/>
            <person name="Unlu G."/>
            <person name="Saier M.H. Jr."/>
            <person name="Klaenhammer T."/>
            <person name="Richardson P."/>
            <person name="Kozyavkin S."/>
            <person name="Weimer B.C."/>
            <person name="Mills D.A."/>
        </authorList>
    </citation>
    <scope>NUCLEOTIDE SEQUENCE [LARGE SCALE GENOMIC DNA]</scope>
    <source>
        <strain>ATCC 334 / BCRC 17002 / CCUG 31169 / CIP 107868 / KCTC 3260 / NRRL B-441</strain>
    </source>
</reference>
<dbReference type="EMBL" id="CP000423">
    <property type="protein sequence ID" value="ABJ70414.1"/>
    <property type="molecule type" value="Genomic_DNA"/>
</dbReference>
<dbReference type="RefSeq" id="WP_003579493.1">
    <property type="nucleotide sequence ID" value="NC_008526.1"/>
</dbReference>
<dbReference type="RefSeq" id="YP_806856.1">
    <property type="nucleotide sequence ID" value="NC_008526.1"/>
</dbReference>
<dbReference type="SMR" id="Q038F8"/>
<dbReference type="STRING" id="321967.LSEI_1640"/>
<dbReference type="PaxDb" id="321967-LSEI_1640"/>
<dbReference type="KEGG" id="lca:LSEI_1640"/>
<dbReference type="PATRIC" id="fig|321967.11.peg.1621"/>
<dbReference type="HOGENOM" id="CLU_087843_3_2_9"/>
<dbReference type="Proteomes" id="UP000001651">
    <property type="component" value="Chromosome"/>
</dbReference>
<dbReference type="GO" id="GO:0005829">
    <property type="term" value="C:cytosol"/>
    <property type="evidence" value="ECO:0007669"/>
    <property type="project" value="TreeGrafter"/>
</dbReference>
<dbReference type="GO" id="GO:0003723">
    <property type="term" value="F:RNA binding"/>
    <property type="evidence" value="ECO:0007669"/>
    <property type="project" value="UniProtKB-UniRule"/>
</dbReference>
<dbReference type="GO" id="GO:0006353">
    <property type="term" value="P:DNA-templated transcription termination"/>
    <property type="evidence" value="ECO:0007669"/>
    <property type="project" value="UniProtKB-UniRule"/>
</dbReference>
<dbReference type="GO" id="GO:0031564">
    <property type="term" value="P:transcription antitermination"/>
    <property type="evidence" value="ECO:0007669"/>
    <property type="project" value="UniProtKB-KW"/>
</dbReference>
<dbReference type="Gene3D" id="1.10.940.10">
    <property type="entry name" value="NusB-like"/>
    <property type="match status" value="1"/>
</dbReference>
<dbReference type="HAMAP" id="MF_00073">
    <property type="entry name" value="NusB"/>
    <property type="match status" value="1"/>
</dbReference>
<dbReference type="InterPro" id="IPR035926">
    <property type="entry name" value="NusB-like_sf"/>
</dbReference>
<dbReference type="InterPro" id="IPR011605">
    <property type="entry name" value="NusB_fam"/>
</dbReference>
<dbReference type="InterPro" id="IPR006027">
    <property type="entry name" value="NusB_RsmB_TIM44"/>
</dbReference>
<dbReference type="NCBIfam" id="TIGR01951">
    <property type="entry name" value="nusB"/>
    <property type="match status" value="1"/>
</dbReference>
<dbReference type="NCBIfam" id="NF001223">
    <property type="entry name" value="PRK00202.1-1"/>
    <property type="match status" value="1"/>
</dbReference>
<dbReference type="PANTHER" id="PTHR11078:SF3">
    <property type="entry name" value="ANTITERMINATION NUSB DOMAIN-CONTAINING PROTEIN"/>
    <property type="match status" value="1"/>
</dbReference>
<dbReference type="PANTHER" id="PTHR11078">
    <property type="entry name" value="N UTILIZATION SUBSTANCE PROTEIN B-RELATED"/>
    <property type="match status" value="1"/>
</dbReference>
<dbReference type="Pfam" id="PF01029">
    <property type="entry name" value="NusB"/>
    <property type="match status" value="1"/>
</dbReference>
<dbReference type="SUPFAM" id="SSF48013">
    <property type="entry name" value="NusB-like"/>
    <property type="match status" value="1"/>
</dbReference>
<name>NUSB_LACP3</name>
<feature type="chain" id="PRO_1000075191" description="Transcription antitermination protein NusB">
    <location>
        <begin position="1"/>
        <end position="135"/>
    </location>
</feature>
<organism>
    <name type="scientific">Lacticaseibacillus paracasei (strain ATCC 334 / BCRC 17002 / CCUG 31169 / CIP 107868 / KCTC 3260 / NRRL B-441)</name>
    <name type="common">Lactobacillus paracasei</name>
    <dbReference type="NCBI Taxonomy" id="321967"/>
    <lineage>
        <taxon>Bacteria</taxon>
        <taxon>Bacillati</taxon>
        <taxon>Bacillota</taxon>
        <taxon>Bacilli</taxon>
        <taxon>Lactobacillales</taxon>
        <taxon>Lactobacillaceae</taxon>
        <taxon>Lacticaseibacillus</taxon>
    </lineage>
</organism>
<keyword id="KW-1185">Reference proteome</keyword>
<keyword id="KW-0694">RNA-binding</keyword>
<keyword id="KW-0804">Transcription</keyword>
<keyword id="KW-0889">Transcription antitermination</keyword>
<keyword id="KW-0805">Transcription regulation</keyword>
<comment type="function">
    <text evidence="1">Involved in transcription antitermination. Required for transcription of ribosomal RNA (rRNA) genes. Binds specifically to the boxA antiterminator sequence of the ribosomal RNA (rrn) operons.</text>
</comment>
<comment type="similarity">
    <text evidence="1">Belongs to the NusB family.</text>
</comment>
<proteinExistence type="inferred from homology"/>
<sequence>MESRHAIREAAFQALFALATNPEADKDAVYAEVLPQDTEVPAYLTTLVEGVLSKQADLDAALTPQLKKGWTLSRLTKPDLIILRLGLYEIRYEEAMPEAAAINEAINLAKRYSDDQSAKFVNGILANFIQATPQA</sequence>
<protein>
    <recommendedName>
        <fullName evidence="1">Transcription antitermination protein NusB</fullName>
    </recommendedName>
    <alternativeName>
        <fullName evidence="1">Antitermination factor NusB</fullName>
    </alternativeName>
</protein>
<evidence type="ECO:0000255" key="1">
    <source>
        <dbReference type="HAMAP-Rule" id="MF_00073"/>
    </source>
</evidence>
<gene>
    <name evidence="1" type="primary">nusB</name>
    <name type="ordered locus">LSEI_1640</name>
</gene>
<accession>Q038F8</accession>